<keyword id="KW-0963">Cytoplasm</keyword>
<keyword id="KW-0664">Pyridoxine biosynthesis</keyword>
<keyword id="KW-1185">Reference proteome</keyword>
<keyword id="KW-0808">Transferase</keyword>
<protein>
    <recommendedName>
        <fullName evidence="1">Pyridoxine 5'-phosphate synthase</fullName>
        <shortName evidence="1">PNP synthase</shortName>
        <ecNumber evidence="1">2.6.99.2</ecNumber>
    </recommendedName>
</protein>
<proteinExistence type="inferred from homology"/>
<gene>
    <name evidence="1" type="primary">pdxJ</name>
    <name type="ordered locus">Pcar_1002</name>
</gene>
<comment type="function">
    <text evidence="1">Catalyzes the complicated ring closure reaction between the two acyclic compounds 1-deoxy-D-xylulose-5-phosphate (DXP) and 3-amino-2-oxopropyl phosphate (1-amino-acetone-3-phosphate or AAP) to form pyridoxine 5'-phosphate (PNP) and inorganic phosphate.</text>
</comment>
<comment type="catalytic activity">
    <reaction evidence="1">
        <text>3-amino-2-oxopropyl phosphate + 1-deoxy-D-xylulose 5-phosphate = pyridoxine 5'-phosphate + phosphate + 2 H2O + H(+)</text>
        <dbReference type="Rhea" id="RHEA:15265"/>
        <dbReference type="ChEBI" id="CHEBI:15377"/>
        <dbReference type="ChEBI" id="CHEBI:15378"/>
        <dbReference type="ChEBI" id="CHEBI:43474"/>
        <dbReference type="ChEBI" id="CHEBI:57279"/>
        <dbReference type="ChEBI" id="CHEBI:57792"/>
        <dbReference type="ChEBI" id="CHEBI:58589"/>
        <dbReference type="EC" id="2.6.99.2"/>
    </reaction>
</comment>
<comment type="pathway">
    <text evidence="1">Cofactor biosynthesis; pyridoxine 5'-phosphate biosynthesis; pyridoxine 5'-phosphate from D-erythrose 4-phosphate: step 5/5.</text>
</comment>
<comment type="subunit">
    <text evidence="1">Homooctamer; tetramer of dimers.</text>
</comment>
<comment type="subcellular location">
    <subcellularLocation>
        <location evidence="1">Cytoplasm</location>
    </subcellularLocation>
</comment>
<comment type="similarity">
    <text evidence="1">Belongs to the PNP synthase family.</text>
</comment>
<dbReference type="EC" id="2.6.99.2" evidence="1"/>
<dbReference type="EMBL" id="CP000142">
    <property type="protein sequence ID" value="ABA88253.1"/>
    <property type="molecule type" value="Genomic_DNA"/>
</dbReference>
<dbReference type="RefSeq" id="WP_011340721.1">
    <property type="nucleotide sequence ID" value="NC_007498.2"/>
</dbReference>
<dbReference type="SMR" id="Q3A5V4"/>
<dbReference type="STRING" id="338963.Pcar_1002"/>
<dbReference type="KEGG" id="pca:Pcar_1002"/>
<dbReference type="eggNOG" id="COG0854">
    <property type="taxonomic scope" value="Bacteria"/>
</dbReference>
<dbReference type="HOGENOM" id="CLU_074563_0_0_7"/>
<dbReference type="OrthoDB" id="9806590at2"/>
<dbReference type="UniPathway" id="UPA00244">
    <property type="reaction ID" value="UER00313"/>
</dbReference>
<dbReference type="Proteomes" id="UP000002534">
    <property type="component" value="Chromosome"/>
</dbReference>
<dbReference type="GO" id="GO:0005829">
    <property type="term" value="C:cytosol"/>
    <property type="evidence" value="ECO:0007669"/>
    <property type="project" value="TreeGrafter"/>
</dbReference>
<dbReference type="GO" id="GO:0033856">
    <property type="term" value="F:pyridoxine 5'-phosphate synthase activity"/>
    <property type="evidence" value="ECO:0007669"/>
    <property type="project" value="UniProtKB-EC"/>
</dbReference>
<dbReference type="GO" id="GO:0008615">
    <property type="term" value="P:pyridoxine biosynthetic process"/>
    <property type="evidence" value="ECO:0007669"/>
    <property type="project" value="UniProtKB-UniRule"/>
</dbReference>
<dbReference type="CDD" id="cd00003">
    <property type="entry name" value="PNPsynthase"/>
    <property type="match status" value="1"/>
</dbReference>
<dbReference type="Gene3D" id="3.20.20.70">
    <property type="entry name" value="Aldolase class I"/>
    <property type="match status" value="1"/>
</dbReference>
<dbReference type="HAMAP" id="MF_00279">
    <property type="entry name" value="PdxJ"/>
    <property type="match status" value="1"/>
</dbReference>
<dbReference type="InterPro" id="IPR013785">
    <property type="entry name" value="Aldolase_TIM"/>
</dbReference>
<dbReference type="InterPro" id="IPR004569">
    <property type="entry name" value="PyrdxlP_synth_PdxJ"/>
</dbReference>
<dbReference type="InterPro" id="IPR036130">
    <property type="entry name" value="Pyridoxine-5'_phos_synth"/>
</dbReference>
<dbReference type="NCBIfam" id="TIGR00559">
    <property type="entry name" value="pdxJ"/>
    <property type="match status" value="1"/>
</dbReference>
<dbReference type="NCBIfam" id="NF003623">
    <property type="entry name" value="PRK05265.1-1"/>
    <property type="match status" value="1"/>
</dbReference>
<dbReference type="NCBIfam" id="NF003625">
    <property type="entry name" value="PRK05265.1-3"/>
    <property type="match status" value="1"/>
</dbReference>
<dbReference type="NCBIfam" id="NF003627">
    <property type="entry name" value="PRK05265.1-5"/>
    <property type="match status" value="1"/>
</dbReference>
<dbReference type="PANTHER" id="PTHR30456">
    <property type="entry name" value="PYRIDOXINE 5'-PHOSPHATE SYNTHASE"/>
    <property type="match status" value="1"/>
</dbReference>
<dbReference type="PANTHER" id="PTHR30456:SF0">
    <property type="entry name" value="PYRIDOXINE 5'-PHOSPHATE SYNTHASE"/>
    <property type="match status" value="1"/>
</dbReference>
<dbReference type="Pfam" id="PF03740">
    <property type="entry name" value="PdxJ"/>
    <property type="match status" value="1"/>
</dbReference>
<dbReference type="SUPFAM" id="SSF63892">
    <property type="entry name" value="Pyridoxine 5'-phosphate synthase"/>
    <property type="match status" value="1"/>
</dbReference>
<accession>Q3A5V4</accession>
<sequence>MALLGVNVDHVATIRQARGTNEPDPVTAAALAELAGADGITIHLREDRRHIQDRDVELIRQTVKTRLNLEMAATDEMVGIALKVRPDAVTLVPEKRKELTTEGGLNVALLRQTLKKHIDLLKQGGISVSLFIDPDLEQVKASHRIGADAIEIHTGAYCDAACAATRSKELDKLTNAVKAGNKLGLLVHAGHGLTYFNIQPVAAIGGIREFNIGHSIISRAVLVGMDRAVREMKDLVGGA</sequence>
<evidence type="ECO:0000255" key="1">
    <source>
        <dbReference type="HAMAP-Rule" id="MF_00279"/>
    </source>
</evidence>
<feature type="chain" id="PRO_0000231824" description="Pyridoxine 5'-phosphate synthase">
    <location>
        <begin position="1"/>
        <end position="239"/>
    </location>
</feature>
<feature type="active site" description="Proton acceptor" evidence="1">
    <location>
        <position position="43"/>
    </location>
</feature>
<feature type="active site" description="Proton acceptor" evidence="1">
    <location>
        <position position="70"/>
    </location>
</feature>
<feature type="active site" description="Proton donor" evidence="1">
    <location>
        <position position="191"/>
    </location>
</feature>
<feature type="binding site" evidence="1">
    <location>
        <position position="7"/>
    </location>
    <ligand>
        <name>3-amino-2-oxopropyl phosphate</name>
        <dbReference type="ChEBI" id="CHEBI:57279"/>
    </ligand>
</feature>
<feature type="binding site" evidence="1">
    <location>
        <begin position="9"/>
        <end position="10"/>
    </location>
    <ligand>
        <name>1-deoxy-D-xylulose 5-phosphate</name>
        <dbReference type="ChEBI" id="CHEBI:57792"/>
    </ligand>
</feature>
<feature type="binding site" evidence="1">
    <location>
        <position position="18"/>
    </location>
    <ligand>
        <name>3-amino-2-oxopropyl phosphate</name>
        <dbReference type="ChEBI" id="CHEBI:57279"/>
    </ligand>
</feature>
<feature type="binding site" evidence="1">
    <location>
        <position position="45"/>
    </location>
    <ligand>
        <name>1-deoxy-D-xylulose 5-phosphate</name>
        <dbReference type="ChEBI" id="CHEBI:57792"/>
    </ligand>
</feature>
<feature type="binding site" evidence="1">
    <location>
        <position position="50"/>
    </location>
    <ligand>
        <name>1-deoxy-D-xylulose 5-phosphate</name>
        <dbReference type="ChEBI" id="CHEBI:57792"/>
    </ligand>
</feature>
<feature type="binding site" evidence="1">
    <location>
        <position position="100"/>
    </location>
    <ligand>
        <name>1-deoxy-D-xylulose 5-phosphate</name>
        <dbReference type="ChEBI" id="CHEBI:57792"/>
    </ligand>
</feature>
<feature type="binding site" evidence="1">
    <location>
        <position position="192"/>
    </location>
    <ligand>
        <name>3-amino-2-oxopropyl phosphate</name>
        <dbReference type="ChEBI" id="CHEBI:57279"/>
    </ligand>
</feature>
<feature type="binding site" evidence="1">
    <location>
        <begin position="213"/>
        <end position="214"/>
    </location>
    <ligand>
        <name>3-amino-2-oxopropyl phosphate</name>
        <dbReference type="ChEBI" id="CHEBI:57279"/>
    </ligand>
</feature>
<feature type="site" description="Transition state stabilizer" evidence="1">
    <location>
        <position position="151"/>
    </location>
</feature>
<organism>
    <name type="scientific">Syntrophotalea carbinolica (strain DSM 2380 / NBRC 103641 / GraBd1)</name>
    <name type="common">Pelobacter carbinolicus</name>
    <dbReference type="NCBI Taxonomy" id="338963"/>
    <lineage>
        <taxon>Bacteria</taxon>
        <taxon>Pseudomonadati</taxon>
        <taxon>Thermodesulfobacteriota</taxon>
        <taxon>Desulfuromonadia</taxon>
        <taxon>Desulfuromonadales</taxon>
        <taxon>Syntrophotaleaceae</taxon>
        <taxon>Syntrophotalea</taxon>
    </lineage>
</organism>
<reference key="1">
    <citation type="submission" date="2005-10" db="EMBL/GenBank/DDBJ databases">
        <title>Complete sequence of Pelobacter carbinolicus DSM 2380.</title>
        <authorList>
            <person name="Copeland A."/>
            <person name="Lucas S."/>
            <person name="Lapidus A."/>
            <person name="Barry K."/>
            <person name="Detter J.C."/>
            <person name="Glavina T."/>
            <person name="Hammon N."/>
            <person name="Israni S."/>
            <person name="Pitluck S."/>
            <person name="Chertkov O."/>
            <person name="Schmutz J."/>
            <person name="Larimer F."/>
            <person name="Land M."/>
            <person name="Kyrpides N."/>
            <person name="Ivanova N."/>
            <person name="Richardson P."/>
        </authorList>
    </citation>
    <scope>NUCLEOTIDE SEQUENCE [LARGE SCALE GENOMIC DNA]</scope>
    <source>
        <strain>DSM 2380 / NBRC 103641 / GraBd1</strain>
    </source>
</reference>
<name>PDXJ_SYNC1</name>